<organism>
    <name type="scientific">Albidiferax ferrireducens (strain ATCC BAA-621 / DSM 15236 / T118)</name>
    <name type="common">Rhodoferax ferrireducens</name>
    <dbReference type="NCBI Taxonomy" id="338969"/>
    <lineage>
        <taxon>Bacteria</taxon>
        <taxon>Pseudomonadati</taxon>
        <taxon>Pseudomonadota</taxon>
        <taxon>Betaproteobacteria</taxon>
        <taxon>Burkholderiales</taxon>
        <taxon>Comamonadaceae</taxon>
        <taxon>Rhodoferax</taxon>
    </lineage>
</organism>
<feature type="chain" id="PRO_1000017149" description="tRNA pseudouridine synthase A">
    <location>
        <begin position="1"/>
        <end position="260"/>
    </location>
</feature>
<feature type="active site" description="Nucleophile" evidence="1">
    <location>
        <position position="51"/>
    </location>
</feature>
<feature type="binding site" evidence="1">
    <location>
        <position position="109"/>
    </location>
    <ligand>
        <name>substrate</name>
    </ligand>
</feature>
<dbReference type="EC" id="5.4.99.12" evidence="1"/>
<dbReference type="EMBL" id="CP000267">
    <property type="protein sequence ID" value="ABD69519.1"/>
    <property type="molecule type" value="Genomic_DNA"/>
</dbReference>
<dbReference type="RefSeq" id="WP_011464087.1">
    <property type="nucleotide sequence ID" value="NC_007908.1"/>
</dbReference>
<dbReference type="SMR" id="Q21XI4"/>
<dbReference type="STRING" id="338969.Rfer_1790"/>
<dbReference type="KEGG" id="rfr:Rfer_1790"/>
<dbReference type="eggNOG" id="COG0101">
    <property type="taxonomic scope" value="Bacteria"/>
</dbReference>
<dbReference type="HOGENOM" id="CLU_014673_0_2_4"/>
<dbReference type="OrthoDB" id="9811823at2"/>
<dbReference type="Proteomes" id="UP000008332">
    <property type="component" value="Chromosome"/>
</dbReference>
<dbReference type="GO" id="GO:0003723">
    <property type="term" value="F:RNA binding"/>
    <property type="evidence" value="ECO:0007669"/>
    <property type="project" value="InterPro"/>
</dbReference>
<dbReference type="GO" id="GO:0160147">
    <property type="term" value="F:tRNA pseudouridine(38-40) synthase activity"/>
    <property type="evidence" value="ECO:0007669"/>
    <property type="project" value="UniProtKB-EC"/>
</dbReference>
<dbReference type="GO" id="GO:0031119">
    <property type="term" value="P:tRNA pseudouridine synthesis"/>
    <property type="evidence" value="ECO:0007669"/>
    <property type="project" value="UniProtKB-UniRule"/>
</dbReference>
<dbReference type="CDD" id="cd02570">
    <property type="entry name" value="PseudoU_synth_EcTruA"/>
    <property type="match status" value="1"/>
</dbReference>
<dbReference type="FunFam" id="3.30.70.580:FF:000001">
    <property type="entry name" value="tRNA pseudouridine synthase A"/>
    <property type="match status" value="1"/>
</dbReference>
<dbReference type="Gene3D" id="3.30.70.660">
    <property type="entry name" value="Pseudouridine synthase I, catalytic domain, C-terminal subdomain"/>
    <property type="match status" value="1"/>
</dbReference>
<dbReference type="Gene3D" id="3.30.70.580">
    <property type="entry name" value="Pseudouridine synthase I, catalytic domain, N-terminal subdomain"/>
    <property type="match status" value="1"/>
</dbReference>
<dbReference type="HAMAP" id="MF_00171">
    <property type="entry name" value="TruA"/>
    <property type="match status" value="1"/>
</dbReference>
<dbReference type="InterPro" id="IPR020103">
    <property type="entry name" value="PsdUridine_synth_cat_dom_sf"/>
</dbReference>
<dbReference type="InterPro" id="IPR001406">
    <property type="entry name" value="PsdUridine_synth_TruA"/>
</dbReference>
<dbReference type="InterPro" id="IPR020097">
    <property type="entry name" value="PsdUridine_synth_TruA_a/b_dom"/>
</dbReference>
<dbReference type="InterPro" id="IPR020095">
    <property type="entry name" value="PsdUridine_synth_TruA_C"/>
</dbReference>
<dbReference type="InterPro" id="IPR020094">
    <property type="entry name" value="TruA/RsuA/RluB/E/F_N"/>
</dbReference>
<dbReference type="NCBIfam" id="TIGR00071">
    <property type="entry name" value="hisT_truA"/>
    <property type="match status" value="1"/>
</dbReference>
<dbReference type="PANTHER" id="PTHR11142">
    <property type="entry name" value="PSEUDOURIDYLATE SYNTHASE"/>
    <property type="match status" value="1"/>
</dbReference>
<dbReference type="PANTHER" id="PTHR11142:SF0">
    <property type="entry name" value="TRNA PSEUDOURIDINE SYNTHASE-LIKE 1"/>
    <property type="match status" value="1"/>
</dbReference>
<dbReference type="Pfam" id="PF01416">
    <property type="entry name" value="PseudoU_synth_1"/>
    <property type="match status" value="2"/>
</dbReference>
<dbReference type="PIRSF" id="PIRSF001430">
    <property type="entry name" value="tRNA_psdUrid_synth"/>
    <property type="match status" value="1"/>
</dbReference>
<dbReference type="SUPFAM" id="SSF55120">
    <property type="entry name" value="Pseudouridine synthase"/>
    <property type="match status" value="1"/>
</dbReference>
<gene>
    <name evidence="1" type="primary">truA</name>
    <name type="ordered locus">Rfer_1790</name>
</gene>
<evidence type="ECO:0000255" key="1">
    <source>
        <dbReference type="HAMAP-Rule" id="MF_00171"/>
    </source>
</evidence>
<protein>
    <recommendedName>
        <fullName evidence="1">tRNA pseudouridine synthase A</fullName>
        <ecNumber evidence="1">5.4.99.12</ecNumber>
    </recommendedName>
    <alternativeName>
        <fullName evidence="1">tRNA pseudouridine(38-40) synthase</fullName>
    </alternativeName>
    <alternativeName>
        <fullName evidence="1">tRNA pseudouridylate synthase I</fullName>
    </alternativeName>
    <alternativeName>
        <fullName evidence="1">tRNA-uridine isomerase I</fullName>
    </alternativeName>
</protein>
<reference key="1">
    <citation type="submission" date="2006-02" db="EMBL/GenBank/DDBJ databases">
        <title>Complete sequence of chromosome of Rhodoferax ferrireducens DSM 15236.</title>
        <authorList>
            <person name="Copeland A."/>
            <person name="Lucas S."/>
            <person name="Lapidus A."/>
            <person name="Barry K."/>
            <person name="Detter J.C."/>
            <person name="Glavina del Rio T."/>
            <person name="Hammon N."/>
            <person name="Israni S."/>
            <person name="Pitluck S."/>
            <person name="Brettin T."/>
            <person name="Bruce D."/>
            <person name="Han C."/>
            <person name="Tapia R."/>
            <person name="Gilna P."/>
            <person name="Kiss H."/>
            <person name="Schmutz J."/>
            <person name="Larimer F."/>
            <person name="Land M."/>
            <person name="Kyrpides N."/>
            <person name="Ivanova N."/>
            <person name="Richardson P."/>
        </authorList>
    </citation>
    <scope>NUCLEOTIDE SEQUENCE [LARGE SCALE GENOMIC DNA]</scope>
    <source>
        <strain>ATCC BAA-621 / DSM 15236 / T118</strain>
    </source>
</reference>
<sequence length="260" mass="29161">MRLALGVSYNGQAYQGWQSQLSRQTVQDQLEMALSKLASHRVSTLCAGRTDAGVHGLMQVIHFDTPLDRAPNSWVRGTNALLPRDIAVEWARPVPPEFHCRASALSRRYAYILLESPVRPSIDAGQVGWTFKPLEQVAMQQAASHLLGEHDFSSFRASACQALSPVKMLQRLDISRHGACWRFEFEANAFLHHMIRNIMGCLITVGQGKKPPEWLKEVLLARNRNVAAPTFSAHGLYFLGPRYAPHWGLPDRTPAFDRLP</sequence>
<comment type="function">
    <text evidence="1">Formation of pseudouridine at positions 38, 39 and 40 in the anticodon stem and loop of transfer RNAs.</text>
</comment>
<comment type="catalytic activity">
    <reaction evidence="1">
        <text>uridine(38/39/40) in tRNA = pseudouridine(38/39/40) in tRNA</text>
        <dbReference type="Rhea" id="RHEA:22376"/>
        <dbReference type="Rhea" id="RHEA-COMP:10085"/>
        <dbReference type="Rhea" id="RHEA-COMP:10087"/>
        <dbReference type="ChEBI" id="CHEBI:65314"/>
        <dbReference type="ChEBI" id="CHEBI:65315"/>
        <dbReference type="EC" id="5.4.99.12"/>
    </reaction>
</comment>
<comment type="subunit">
    <text evidence="1">Homodimer.</text>
</comment>
<comment type="similarity">
    <text evidence="1">Belongs to the tRNA pseudouridine synthase TruA family.</text>
</comment>
<keyword id="KW-0413">Isomerase</keyword>
<keyword id="KW-1185">Reference proteome</keyword>
<keyword id="KW-0819">tRNA processing</keyword>
<proteinExistence type="inferred from homology"/>
<accession>Q21XI4</accession>
<name>TRUA_ALBFT</name>